<feature type="chain" id="PRO_0000053900" description="Pleckstrin homology-like domain family A member 2">
    <location>
        <begin position="1"/>
        <end position="152"/>
    </location>
</feature>
<feature type="domain" description="PH">
    <location>
        <begin position="7"/>
        <end position="99"/>
    </location>
</feature>
<feature type="region of interest" description="Disordered" evidence="2">
    <location>
        <begin position="112"/>
        <end position="152"/>
    </location>
</feature>
<feature type="compositionally biased region" description="Low complexity" evidence="2">
    <location>
        <begin position="118"/>
        <end position="138"/>
    </location>
</feature>
<feature type="compositionally biased region" description="Pro residues" evidence="2">
    <location>
        <begin position="140"/>
        <end position="152"/>
    </location>
</feature>
<feature type="modified residue" description="Phosphoserine" evidence="12 14">
    <location>
        <position position="3"/>
    </location>
</feature>
<feature type="modified residue" description="Phosphoserine" evidence="11 13 14">
    <location>
        <position position="42"/>
    </location>
</feature>
<feature type="modified residue" description="Phosphoserine" evidence="12">
    <location>
        <position position="141"/>
    </location>
</feature>
<feature type="modified residue" description="Phosphoserine" evidence="11 12">
    <location>
        <position position="144"/>
    </location>
</feature>
<feature type="modified residue" description="Phosphothreonine" evidence="11">
    <location>
        <position position="151"/>
    </location>
</feature>
<feature type="sequence conflict" description="In Ref. 5; BAD96747." evidence="10" ref="5">
    <original>W</original>
    <variation>R</variation>
    <location>
        <position position="24"/>
    </location>
</feature>
<name>PHLA2_HUMAN</name>
<comment type="function">
    <text evidence="1">Plays a role in regulating placenta growth. May act via its PH domain that competes with other PH domain-containing proteins, thereby preventing their binding to membrane lipids (By similarity).</text>
</comment>
<comment type="interaction">
    <interactant intactId="EBI-4402464">
        <id>Q53GA4</id>
    </interactant>
    <interactant intactId="EBI-11977403">
        <id>A0A0C3SFZ9</id>
        <label>FCHO1</label>
    </interactant>
    <organismsDiffer>false</organismsDiffer>
    <experiments>3</experiments>
</comment>
<comment type="interaction">
    <interactant intactId="EBI-4402464">
        <id>Q53GA4</id>
    </interactant>
    <interactant intactId="EBI-746259">
        <id>Q96DC9</id>
        <label>OTUB2</label>
    </interactant>
    <organismsDiffer>false</organismsDiffer>
    <experiments>3</experiments>
</comment>
<comment type="interaction">
    <interactant intactId="EBI-4402464">
        <id>Q53GA4</id>
    </interactant>
    <interactant intactId="EBI-17564583">
        <id>Q16385-2</id>
        <label>SSX2B</label>
    </interactant>
    <organismsDiffer>false</organismsDiffer>
    <experiments>3</experiments>
</comment>
<comment type="subcellular location">
    <subcellularLocation>
        <location evidence="1">Cytoplasm</location>
    </subcellularLocation>
    <subcellularLocation>
        <location evidence="1">Membrane</location>
        <topology evidence="1">Peripheral membrane protein</topology>
    </subcellularLocation>
</comment>
<comment type="tissue specificity">
    <text evidence="3 4 5 7 9">Expressed in placenta and adult prostate gland. In placenta, it is present in all cells of the villous cytotrophoblast. The protein is absent in cells from hydatidiform moles. Hydatidiform mole is a gestation characterized by abnormal development of both fetus and trophoblast. The majority of hydatidiform moles are associated with an excess of paternal to maternal genomes and are likely to result from the abnormal expression of imprinted genes (at protein level). Expressed at low levels in adult liver and lung, and fetal liver. Expressed in adult brain and neuroblastoma, medullablastoma and glioblastoma cell lines.</text>
</comment>
<comment type="induction">
    <text evidence="6 8">Maternal PHLDA2 allele is activated, while paternal Phlda2 is repressed due to genomic imprinting. Down-regulated by hypoxia. Although highly similar to PHLDA3 protein, it is not regulated by p53/TP53.</text>
</comment>
<comment type="domain">
    <text evidence="1">The PH domain binds phosphoinositides with a broad specificity. It may compete with the PH domain of some other proteins, thereby interfering with their binding to phosphatidylinositol 4,5-bisphosphate (PIP2) and phosphatidylinositol 3,4,5-trisphosphate (PIP3) (By similarity).</text>
</comment>
<comment type="miscellaneous">
    <text>The PHLDA2 locus is imprinted. Loss of imprinting results in overexpression. Imprinting is dependent on RNAi machinery.</text>
</comment>
<comment type="similarity">
    <text evidence="10">Belongs to the PHLDA2 family.</text>
</comment>
<accession>Q53GA4</accession>
<accession>O00496</accession>
<evidence type="ECO:0000250" key="1"/>
<evidence type="ECO:0000256" key="2">
    <source>
        <dbReference type="SAM" id="MobiDB-lite"/>
    </source>
</evidence>
<evidence type="ECO:0000269" key="3">
    <source>
    </source>
</evidence>
<evidence type="ECO:0000269" key="4">
    <source>
    </source>
</evidence>
<evidence type="ECO:0000269" key="5">
    <source>
    </source>
</evidence>
<evidence type="ECO:0000269" key="6">
    <source>
    </source>
</evidence>
<evidence type="ECO:0000269" key="7">
    <source>
    </source>
</evidence>
<evidence type="ECO:0000269" key="8">
    <source>
    </source>
</evidence>
<evidence type="ECO:0000269" key="9">
    <source>
    </source>
</evidence>
<evidence type="ECO:0000305" key="10"/>
<evidence type="ECO:0007744" key="11">
    <source>
    </source>
</evidence>
<evidence type="ECO:0007744" key="12">
    <source>
    </source>
</evidence>
<evidence type="ECO:0007744" key="13">
    <source>
    </source>
</evidence>
<evidence type="ECO:0007744" key="14">
    <source>
    </source>
</evidence>
<organism>
    <name type="scientific">Homo sapiens</name>
    <name type="common">Human</name>
    <dbReference type="NCBI Taxonomy" id="9606"/>
    <lineage>
        <taxon>Eukaryota</taxon>
        <taxon>Metazoa</taxon>
        <taxon>Chordata</taxon>
        <taxon>Craniata</taxon>
        <taxon>Vertebrata</taxon>
        <taxon>Euteleostomi</taxon>
        <taxon>Mammalia</taxon>
        <taxon>Eutheria</taxon>
        <taxon>Euarchontoglires</taxon>
        <taxon>Primates</taxon>
        <taxon>Haplorrhini</taxon>
        <taxon>Catarrhini</taxon>
        <taxon>Hominidae</taxon>
        <taxon>Homo</taxon>
    </lineage>
</organism>
<gene>
    <name type="primary">PHLDA2</name>
    <name type="synonym">BWR1C</name>
    <name type="synonym">HLDA2</name>
    <name type="synonym">IPL</name>
    <name type="synonym">TSSC3</name>
</gene>
<proteinExistence type="evidence at protein level"/>
<protein>
    <recommendedName>
        <fullName>Pleckstrin homology-like domain family A member 2</fullName>
    </recommendedName>
    <alternativeName>
        <fullName>Beckwith-Wiedemann syndrome chromosomal region 1 candidate gene C protein</fullName>
    </alternativeName>
    <alternativeName>
        <fullName>Imprinted in placenta and liver protein</fullName>
    </alternativeName>
    <alternativeName>
        <fullName>Tumor-suppressing STF cDNA 3 protein</fullName>
    </alternativeName>
    <alternativeName>
        <fullName>Tumor-suppressing subchromosomal transferable fragment candidate gene 3 protein</fullName>
    </alternativeName>
    <alternativeName>
        <fullName>p17-Beckwith-Wiedemann region 1 C</fullName>
        <shortName>p17-BWR1C</shortName>
    </alternativeName>
</protein>
<reference key="1">
    <citation type="journal article" date="1997" name="Genomics">
        <title>A 2.5-Mb transcript map of a tumor-suppressing subchromosomal transferable fragment from 11p15.5, and isolation and sequence analysis of three novel genes.</title>
        <authorList>
            <person name="Hu R.-J."/>
            <person name="Lee M.P."/>
            <person name="Connors T.D."/>
            <person name="Johnson L.A."/>
            <person name="Burn T.C."/>
            <person name="Su K."/>
            <person name="Landes G.M."/>
            <person name="Feinberg A.P."/>
        </authorList>
    </citation>
    <scope>NUCLEOTIDE SEQUENCE [MRNA]</scope>
</reference>
<reference key="2">
    <citation type="journal article" date="1997" name="Hum. Mol. Genet.">
        <title>The IPL gene on chromosome 11p15.5 is imprinted in humans and mice and is similar to TDAG51, implicated in Fas expression and apoptosis.</title>
        <authorList>
            <person name="Qian N."/>
            <person name="Frank D."/>
            <person name="O'Keefe D."/>
            <person name="Dao D."/>
            <person name="Zhao L."/>
            <person name="Yuan L."/>
            <person name="Wang Q."/>
            <person name="Keating M."/>
            <person name="Walsh C."/>
            <person name="Tycko B."/>
        </authorList>
    </citation>
    <scope>NUCLEOTIDE SEQUENCE [MRNA]</scope>
    <scope>TISSUE SPECIFICITY</scope>
</reference>
<reference key="3">
    <citation type="journal article" date="1998" name="Proc. Natl. Acad. Sci. U.S.A.">
        <title>Transcriptional map of 170-kb region at chromosome 11p15.5: identification and mutational analysis of the BWR1A gene reveals the presence of mutations in tumor samples.</title>
        <authorList>
            <person name="Schwienbacher C."/>
            <person name="Sabbioni S."/>
            <person name="Campi M."/>
            <person name="Veronese A."/>
            <person name="Bernardi G."/>
            <person name="Menegatti A."/>
            <person name="Hatada I."/>
            <person name="Mukai T."/>
            <person name="Ohashi H."/>
            <person name="Barbanti-Brodano G."/>
            <person name="Croce C.M."/>
            <person name="Negrini M."/>
        </authorList>
    </citation>
    <scope>NUCLEOTIDE SEQUENCE [MRNA]</scope>
</reference>
<reference key="4">
    <citation type="submission" date="2004-05" db="EMBL/GenBank/DDBJ databases">
        <title>Cloning of human full open reading frames in Gateway(TM) system entry vector (pDONR201).</title>
        <authorList>
            <person name="Ebert L."/>
            <person name="Schick M."/>
            <person name="Neubert P."/>
            <person name="Schatten R."/>
            <person name="Henze S."/>
            <person name="Korn B."/>
        </authorList>
    </citation>
    <scope>NUCLEOTIDE SEQUENCE [LARGE SCALE MRNA]</scope>
</reference>
<reference key="5">
    <citation type="submission" date="2005-04" db="EMBL/GenBank/DDBJ databases">
        <authorList>
            <person name="Suzuki Y."/>
            <person name="Sugano S."/>
            <person name="Totoki Y."/>
            <person name="Toyoda A."/>
            <person name="Takeda T."/>
            <person name="Sakaki Y."/>
            <person name="Tanaka A."/>
            <person name="Yokoyama S."/>
        </authorList>
    </citation>
    <scope>NUCLEOTIDE SEQUENCE [LARGE SCALE MRNA]</scope>
    <source>
        <tissue>Umbilical vein</tissue>
    </source>
</reference>
<reference key="6">
    <citation type="journal article" date="2004" name="Genome Res.">
        <title>The status, quality, and expansion of the NIH full-length cDNA project: the Mammalian Gene Collection (MGC).</title>
        <authorList>
            <consortium name="The MGC Project Team"/>
        </authorList>
    </citation>
    <scope>NUCLEOTIDE SEQUENCE [LARGE SCALE MRNA]</scope>
    <source>
        <tissue>Skin</tissue>
    </source>
</reference>
<reference key="7">
    <citation type="journal article" date="1999" name="Mamm. Genome">
        <title>A novel pleckstrin homology-related gene family defined by Ipl/Tssc3, TDAG51, and Tih1: tissue-specific expression, chromosomal location, and parental imprinting.</title>
        <authorList>
            <person name="Frank D."/>
            <person name="Mendelsohn C.L."/>
            <person name="Ciccone E."/>
            <person name="Svensson K."/>
            <person name="Ohlsson R."/>
            <person name="Tycko B."/>
        </authorList>
    </citation>
    <scope>TISSUE SPECIFICITY</scope>
</reference>
<reference key="8">
    <citation type="journal article" date="2000" name="Hum. Mol. Genet.">
        <title>Retention of imprinting of the human apoptosis-related gene TSSC3 in human brain tumors.</title>
        <authorList>
            <person name="Mueller S."/>
            <person name="van den Boom D."/>
            <person name="Zirkel D."/>
            <person name="Koester H."/>
            <person name="Berthold F."/>
            <person name="Schwab M."/>
            <person name="Westphal M."/>
            <person name="Zumkeller W."/>
        </authorList>
    </citation>
    <scope>TISSUE SPECIFICITY</scope>
</reference>
<reference key="9">
    <citation type="journal article" date="2003" name="Placenta">
        <title>The product of the imprinted gene IPL marks human villous cytotrophoblast and is lost in complete hydatidiform mole.</title>
        <authorList>
            <person name="Saxena A."/>
            <person name="Frank D."/>
            <person name="Panichkul P."/>
            <person name="Van den Veyver I.B."/>
            <person name="Tycko B."/>
            <person name="Thaker H."/>
        </authorList>
    </citation>
    <scope>TISSUE SPECIFICITY</scope>
</reference>
<reference key="10">
    <citation type="journal article" date="2004" name="J. Reprod. Med.">
        <title>Immunohistochemistry for the imprinted gene product IPL/PHLDA2 for facilitating the differential diagnosis of complete hydatidiform mole.</title>
        <authorList>
            <person name="Thaker H.M."/>
            <person name="Berlin A."/>
            <person name="Tycko B."/>
            <person name="Goldstein D.P."/>
            <person name="Berkowitz R.S."/>
            <person name="Castrillon D.H."/>
            <person name="Genest D.R."/>
        </authorList>
    </citation>
    <scope>SUBCELLULAR LOCATION</scope>
    <scope>TISSUE SPECIFICITY</scope>
</reference>
<reference key="11">
    <citation type="journal article" date="2004" name="Mod. Pathol.">
        <title>Complete hydatidiform mole retaining a chromosome 11 of maternal origin: molecular genetic analysis of a case.</title>
        <authorList>
            <person name="Fisher R.A."/>
            <person name="Nucci M.R."/>
            <person name="Thaker H.M."/>
            <person name="Weremowicz S."/>
            <person name="Genest D.R."/>
            <person name="Castrillon D.H."/>
        </authorList>
    </citation>
    <scope>INDUCTION</scope>
    <scope>IMPRINTING</scope>
</reference>
<reference key="12">
    <citation type="journal article" date="2007" name="Biochim. Biophys. Acta">
        <title>Upregulation of PHLDA2 in Dicer knockdown HEK293 cells.</title>
        <authorList>
            <person name="Tang K.-F."/>
            <person name="Wang Y."/>
            <person name="Wang P."/>
            <person name="Chen M."/>
            <person name="Chen Y."/>
            <person name="Hu H.-D."/>
            <person name="Hu P."/>
            <person name="Wang B."/>
            <person name="Yang W."/>
            <person name="Ren H."/>
        </authorList>
    </citation>
    <scope>IMPRINTING</scope>
</reference>
<reference key="13">
    <citation type="journal article" date="2007" name="Placenta">
        <title>Hypoxia regulates the expression of PHLDA2 in primary term human trophoblasts.</title>
        <authorList>
            <person name="Kim H.-S."/>
            <person name="Roh C.-R."/>
            <person name="Chen B."/>
            <person name="Tycko B."/>
            <person name="Nelson D.M."/>
            <person name="Sadovsky Y."/>
        </authorList>
    </citation>
    <scope>INDUCTION</scope>
</reference>
<reference key="14">
    <citation type="journal article" date="2008" name="Mol. Cell">
        <title>Kinase-selective enrichment enables quantitative phosphoproteomics of the kinome across the cell cycle.</title>
        <authorList>
            <person name="Daub H."/>
            <person name="Olsen J.V."/>
            <person name="Bairlein M."/>
            <person name="Gnad F."/>
            <person name="Oppermann F.S."/>
            <person name="Korner R."/>
            <person name="Greff Z."/>
            <person name="Keri G."/>
            <person name="Stemmann O."/>
            <person name="Mann M."/>
        </authorList>
    </citation>
    <scope>PHOSPHORYLATION [LARGE SCALE ANALYSIS] AT SER-3; SER-141 AND SER-144</scope>
    <scope>IDENTIFICATION BY MASS SPECTROMETRY [LARGE SCALE ANALYSIS]</scope>
    <source>
        <tissue>Cervix carcinoma</tissue>
    </source>
</reference>
<reference key="15">
    <citation type="journal article" date="2008" name="Proc. Natl. Acad. Sci. U.S.A.">
        <title>A quantitative atlas of mitotic phosphorylation.</title>
        <authorList>
            <person name="Dephoure N."/>
            <person name="Zhou C."/>
            <person name="Villen J."/>
            <person name="Beausoleil S.A."/>
            <person name="Bakalarski C.E."/>
            <person name="Elledge S.J."/>
            <person name="Gygi S.P."/>
        </authorList>
    </citation>
    <scope>PHOSPHORYLATION [LARGE SCALE ANALYSIS] AT SER-42; SER-144 AND THR-151</scope>
    <scope>IDENTIFICATION BY MASS SPECTROMETRY [LARGE SCALE ANALYSIS]</scope>
    <source>
        <tissue>Cervix carcinoma</tissue>
    </source>
</reference>
<reference key="16">
    <citation type="journal article" date="2009" name="Cell">
        <title>PH domain-only protein PHLDA3 is a p53-regulated repressor of Akt.</title>
        <authorList>
            <person name="Kawase T."/>
            <person name="Ohki R."/>
            <person name="Shibata T."/>
            <person name="Tsutsumi S."/>
            <person name="Kamimura N."/>
            <person name="Inazawa J."/>
            <person name="Ohta T."/>
            <person name="Ichikawa H."/>
            <person name="Aburatani H."/>
            <person name="Tashiro F."/>
            <person name="Taya Y."/>
        </authorList>
    </citation>
    <scope>LACK OF INDUCTION BY TP53</scope>
</reference>
<reference key="17">
    <citation type="journal article" date="2009" name="Mol. Cell. Proteomics">
        <title>Large-scale proteomics analysis of the human kinome.</title>
        <authorList>
            <person name="Oppermann F.S."/>
            <person name="Gnad F."/>
            <person name="Olsen J.V."/>
            <person name="Hornberger R."/>
            <person name="Greff Z."/>
            <person name="Keri G."/>
            <person name="Mann M."/>
            <person name="Daub H."/>
        </authorList>
    </citation>
    <scope>IDENTIFICATION BY MASS SPECTROMETRY [LARGE SCALE ANALYSIS]</scope>
</reference>
<reference key="18">
    <citation type="journal article" date="2010" name="Sci. Signal.">
        <title>Quantitative phosphoproteomics reveals widespread full phosphorylation site occupancy during mitosis.</title>
        <authorList>
            <person name="Olsen J.V."/>
            <person name="Vermeulen M."/>
            <person name="Santamaria A."/>
            <person name="Kumar C."/>
            <person name="Miller M.L."/>
            <person name="Jensen L.J."/>
            <person name="Gnad F."/>
            <person name="Cox J."/>
            <person name="Jensen T.S."/>
            <person name="Nigg E.A."/>
            <person name="Brunak S."/>
            <person name="Mann M."/>
        </authorList>
    </citation>
    <scope>PHOSPHORYLATION [LARGE SCALE ANALYSIS] AT SER-42</scope>
    <scope>IDENTIFICATION BY MASS SPECTROMETRY [LARGE SCALE ANALYSIS]</scope>
    <source>
        <tissue>Cervix carcinoma</tissue>
    </source>
</reference>
<reference key="19">
    <citation type="journal article" date="2012" name="Proc. Natl. Acad. Sci. U.S.A.">
        <title>N-terminal acetylome analyses and functional insights of the N-terminal acetyltransferase NatB.</title>
        <authorList>
            <person name="Van Damme P."/>
            <person name="Lasa M."/>
            <person name="Polevoda B."/>
            <person name="Gazquez C."/>
            <person name="Elosegui-Artola A."/>
            <person name="Kim D.S."/>
            <person name="De Juan-Pardo E."/>
            <person name="Demeyer K."/>
            <person name="Hole K."/>
            <person name="Larrea E."/>
            <person name="Timmerman E."/>
            <person name="Prieto J."/>
            <person name="Arnesen T."/>
            <person name="Sherman F."/>
            <person name="Gevaert K."/>
            <person name="Aldabe R."/>
        </authorList>
    </citation>
    <scope>IDENTIFICATION BY MASS SPECTROMETRY [LARGE SCALE ANALYSIS]</scope>
</reference>
<reference key="20">
    <citation type="journal article" date="2013" name="J. Proteome Res.">
        <title>Toward a comprehensive characterization of a human cancer cell phosphoproteome.</title>
        <authorList>
            <person name="Zhou H."/>
            <person name="Di Palma S."/>
            <person name="Preisinger C."/>
            <person name="Peng M."/>
            <person name="Polat A.N."/>
            <person name="Heck A.J."/>
            <person name="Mohammed S."/>
        </authorList>
    </citation>
    <scope>PHOSPHORYLATION [LARGE SCALE ANALYSIS] AT SER-3 AND SER-42</scope>
    <scope>IDENTIFICATION BY MASS SPECTROMETRY [LARGE SCALE ANALYSIS]</scope>
    <source>
        <tissue>Cervix carcinoma</tissue>
        <tissue>Erythroleukemia</tissue>
    </source>
</reference>
<dbReference type="EMBL" id="AF019953">
    <property type="protein sequence ID" value="AAC51912.1"/>
    <property type="molecule type" value="mRNA"/>
</dbReference>
<dbReference type="EMBL" id="AF001294">
    <property type="protein sequence ID" value="AAB86680.1"/>
    <property type="molecule type" value="mRNA"/>
</dbReference>
<dbReference type="EMBL" id="AF035444">
    <property type="protein sequence ID" value="AAC17458.1"/>
    <property type="molecule type" value="mRNA"/>
</dbReference>
<dbReference type="EMBL" id="CR407664">
    <property type="protein sequence ID" value="CAG28592.1"/>
    <property type="molecule type" value="mRNA"/>
</dbReference>
<dbReference type="EMBL" id="AK223027">
    <property type="protein sequence ID" value="BAD96747.1"/>
    <property type="molecule type" value="mRNA"/>
</dbReference>
<dbReference type="EMBL" id="BC005034">
    <property type="protein sequence ID" value="AAH05034.1"/>
    <property type="molecule type" value="mRNA"/>
</dbReference>
<dbReference type="CCDS" id="CCDS7741.1"/>
<dbReference type="RefSeq" id="NP_003302.1">
    <property type="nucleotide sequence ID" value="NM_003311.4"/>
</dbReference>
<dbReference type="SMR" id="Q53GA4"/>
<dbReference type="BioGRID" id="113113">
    <property type="interactions" value="24"/>
</dbReference>
<dbReference type="FunCoup" id="Q53GA4">
    <property type="interactions" value="161"/>
</dbReference>
<dbReference type="IntAct" id="Q53GA4">
    <property type="interactions" value="11"/>
</dbReference>
<dbReference type="STRING" id="9606.ENSP00000319231"/>
<dbReference type="iPTMnet" id="Q53GA4"/>
<dbReference type="PhosphoSitePlus" id="Q53GA4"/>
<dbReference type="BioMuta" id="PHLDA2"/>
<dbReference type="DMDM" id="84029394"/>
<dbReference type="jPOST" id="Q53GA4"/>
<dbReference type="MassIVE" id="Q53GA4"/>
<dbReference type="PaxDb" id="9606-ENSP00000319231"/>
<dbReference type="PeptideAtlas" id="Q53GA4"/>
<dbReference type="ProteomicsDB" id="62476"/>
<dbReference type="Pumba" id="Q53GA4"/>
<dbReference type="Antibodypedia" id="1202">
    <property type="antibodies" value="306 antibodies from 33 providers"/>
</dbReference>
<dbReference type="DNASU" id="7262"/>
<dbReference type="Ensembl" id="ENST00000314222.5">
    <property type="protein sequence ID" value="ENSP00000319231.4"/>
    <property type="gene ID" value="ENSG00000181649.9"/>
</dbReference>
<dbReference type="Ensembl" id="ENST00000618418.2">
    <property type="protein sequence ID" value="ENSP00000483602.1"/>
    <property type="gene ID" value="ENSG00000274538.2"/>
</dbReference>
<dbReference type="GeneID" id="7262"/>
<dbReference type="KEGG" id="hsa:7262"/>
<dbReference type="MANE-Select" id="ENST00000314222.5">
    <property type="protein sequence ID" value="ENSP00000319231.4"/>
    <property type="RefSeq nucleotide sequence ID" value="NM_003311.4"/>
    <property type="RefSeq protein sequence ID" value="NP_003302.1"/>
</dbReference>
<dbReference type="UCSC" id="uc001lxa.2">
    <property type="organism name" value="human"/>
</dbReference>
<dbReference type="AGR" id="HGNC:12385"/>
<dbReference type="CTD" id="7262"/>
<dbReference type="DisGeNET" id="7262"/>
<dbReference type="GeneCards" id="PHLDA2"/>
<dbReference type="HGNC" id="HGNC:12385">
    <property type="gene designation" value="PHLDA2"/>
</dbReference>
<dbReference type="HPA" id="ENSG00000181649">
    <property type="expression patterns" value="Tissue enhanced (esophagus, placenta)"/>
</dbReference>
<dbReference type="MIM" id="602131">
    <property type="type" value="gene"/>
</dbReference>
<dbReference type="neXtProt" id="NX_Q53GA4"/>
<dbReference type="OpenTargets" id="ENSG00000181649"/>
<dbReference type="PharmGKB" id="PA37053"/>
<dbReference type="VEuPathDB" id="HostDB:ENSG00000181649"/>
<dbReference type="eggNOG" id="ENOG502RXZA">
    <property type="taxonomic scope" value="Eukaryota"/>
</dbReference>
<dbReference type="GeneTree" id="ENSGT00440000039564"/>
<dbReference type="HOGENOM" id="CLU_062639_1_0_1"/>
<dbReference type="InParanoid" id="Q53GA4"/>
<dbReference type="OMA" id="CWHAEIT"/>
<dbReference type="OrthoDB" id="9630709at2759"/>
<dbReference type="PAN-GO" id="Q53GA4">
    <property type="GO annotations" value="1 GO annotation based on evolutionary models"/>
</dbReference>
<dbReference type="PhylomeDB" id="Q53GA4"/>
<dbReference type="TreeFam" id="TF332320"/>
<dbReference type="PathwayCommons" id="Q53GA4"/>
<dbReference type="SignaLink" id="Q53GA4"/>
<dbReference type="BioGRID-ORCS" id="7262">
    <property type="hits" value="21 hits in 1160 CRISPR screens"/>
</dbReference>
<dbReference type="ChiTaRS" id="PHLDA2">
    <property type="organism name" value="human"/>
</dbReference>
<dbReference type="GeneWiki" id="PHLDA2"/>
<dbReference type="GenomeRNAi" id="7262"/>
<dbReference type="Pharos" id="Q53GA4">
    <property type="development level" value="Tbio"/>
</dbReference>
<dbReference type="PRO" id="PR:Q53GA4"/>
<dbReference type="Proteomes" id="UP000005640">
    <property type="component" value="Chromosome 11"/>
</dbReference>
<dbReference type="RNAct" id="Q53GA4">
    <property type="molecule type" value="protein"/>
</dbReference>
<dbReference type="Bgee" id="ENSG00000181649">
    <property type="expression patterns" value="Expressed in placenta and 91 other cell types or tissues"/>
</dbReference>
<dbReference type="GO" id="GO:0005737">
    <property type="term" value="C:cytoplasm"/>
    <property type="evidence" value="ECO:0007669"/>
    <property type="project" value="UniProtKB-SubCell"/>
</dbReference>
<dbReference type="GO" id="GO:0016020">
    <property type="term" value="C:membrane"/>
    <property type="evidence" value="ECO:0007669"/>
    <property type="project" value="UniProtKB-SubCell"/>
</dbReference>
<dbReference type="GO" id="GO:1901981">
    <property type="term" value="F:phosphatidylinositol phosphate binding"/>
    <property type="evidence" value="ECO:0007669"/>
    <property type="project" value="InterPro"/>
</dbReference>
<dbReference type="GO" id="GO:0009887">
    <property type="term" value="P:animal organ morphogenesis"/>
    <property type="evidence" value="ECO:0007669"/>
    <property type="project" value="Ensembl"/>
</dbReference>
<dbReference type="GO" id="GO:0006915">
    <property type="term" value="P:apoptotic process"/>
    <property type="evidence" value="ECO:0000304"/>
    <property type="project" value="ProtInc"/>
</dbReference>
<dbReference type="GO" id="GO:0001890">
    <property type="term" value="P:placenta development"/>
    <property type="evidence" value="ECO:0000318"/>
    <property type="project" value="GO_Central"/>
</dbReference>
<dbReference type="GO" id="GO:0043065">
    <property type="term" value="P:positive regulation of apoptotic process"/>
    <property type="evidence" value="ECO:0007669"/>
    <property type="project" value="InterPro"/>
</dbReference>
<dbReference type="GO" id="GO:0030334">
    <property type="term" value="P:regulation of cell migration"/>
    <property type="evidence" value="ECO:0007669"/>
    <property type="project" value="Ensembl"/>
</dbReference>
<dbReference type="GO" id="GO:0045995">
    <property type="term" value="P:regulation of embryonic development"/>
    <property type="evidence" value="ECO:0007669"/>
    <property type="project" value="Ensembl"/>
</dbReference>
<dbReference type="GO" id="GO:0010468">
    <property type="term" value="P:regulation of gene expression"/>
    <property type="evidence" value="ECO:0007669"/>
    <property type="project" value="Ensembl"/>
</dbReference>
<dbReference type="GO" id="GO:0070873">
    <property type="term" value="P:regulation of glycogen metabolic process"/>
    <property type="evidence" value="ECO:0007669"/>
    <property type="project" value="Ensembl"/>
</dbReference>
<dbReference type="GO" id="GO:0060721">
    <property type="term" value="P:regulation of spongiotrophoblast cell proliferation"/>
    <property type="evidence" value="ECO:0007669"/>
    <property type="project" value="Ensembl"/>
</dbReference>
<dbReference type="CDD" id="cd00821">
    <property type="entry name" value="PH"/>
    <property type="match status" value="1"/>
</dbReference>
<dbReference type="FunFam" id="2.30.29.30:FF:000270">
    <property type="entry name" value="Pleckstrin homology-like domain family A member 3"/>
    <property type="match status" value="1"/>
</dbReference>
<dbReference type="Gene3D" id="2.30.29.30">
    <property type="entry name" value="Pleckstrin-homology domain (PH domain)/Phosphotyrosine-binding domain (PTB)"/>
    <property type="match status" value="1"/>
</dbReference>
<dbReference type="InterPro" id="IPR011993">
    <property type="entry name" value="PH-like_dom_sf"/>
</dbReference>
<dbReference type="InterPro" id="IPR001849">
    <property type="entry name" value="PH_domain"/>
</dbReference>
<dbReference type="InterPro" id="IPR042832">
    <property type="entry name" value="PHLA1/2/3"/>
</dbReference>
<dbReference type="PANTHER" id="PTHR15478:SF8">
    <property type="entry name" value="PLECKSTRIN HOMOLOGY-LIKE DOMAIN FAMILY A MEMBER 2"/>
    <property type="match status" value="1"/>
</dbReference>
<dbReference type="PANTHER" id="PTHR15478">
    <property type="entry name" value="PLECKSTRIN HOMOLOGY-LIKE DOMAIN, PQ-RICH PROTEIN"/>
    <property type="match status" value="1"/>
</dbReference>
<dbReference type="SMART" id="SM00233">
    <property type="entry name" value="PH"/>
    <property type="match status" value="1"/>
</dbReference>
<dbReference type="SUPFAM" id="SSF50729">
    <property type="entry name" value="PH domain-like"/>
    <property type="match status" value="1"/>
</dbReference>
<keyword id="KW-0963">Cytoplasm</keyword>
<keyword id="KW-0472">Membrane</keyword>
<keyword id="KW-0597">Phosphoprotein</keyword>
<keyword id="KW-1267">Proteomics identification</keyword>
<keyword id="KW-1185">Reference proteome</keyword>
<sequence length="152" mass="17092">MKSPDEVLREGELEKRSDSLFQLWKKKRGVLTSDRLSLFPASPRARPKELRFHSILKVDCVERTGKYVYFTIVTTDHKEIDFRCAGESCWNAAIALALIDFQNRRALQDFRSRQERTAPAAPAEDAVAAAAAAPSEPSEPSRPSPQPKPRTP</sequence>